<dbReference type="EMBL" id="AB073177">
    <property type="protein sequence ID" value="BAB88389.1"/>
    <property type="molecule type" value="mRNA"/>
</dbReference>
<dbReference type="EMBL" id="AC004392">
    <property type="protein sequence ID" value="AAC28521.1"/>
    <property type="status" value="ALT_SEQ"/>
    <property type="molecule type" value="Genomic_DNA"/>
</dbReference>
<dbReference type="EMBL" id="CP002684">
    <property type="protein sequence ID" value="AEE33916.1"/>
    <property type="molecule type" value="Genomic_DNA"/>
</dbReference>
<dbReference type="EMBL" id="AK118776">
    <property type="protein sequence ID" value="BAC43369.1"/>
    <property type="molecule type" value="mRNA"/>
</dbReference>
<dbReference type="EMBL" id="BT005441">
    <property type="protein sequence ID" value="AAO63861.1"/>
    <property type="molecule type" value="mRNA"/>
</dbReference>
<dbReference type="EMBL" id="AY085871">
    <property type="protein sequence ID" value="AAM63084.1"/>
    <property type="molecule type" value="mRNA"/>
</dbReference>
<dbReference type="PIR" id="T02148">
    <property type="entry name" value="T02148"/>
</dbReference>
<dbReference type="RefSeq" id="NP_176395.1">
    <molecule id="Q8S927-1"/>
    <property type="nucleotide sequence ID" value="NM_104884.5"/>
</dbReference>
<dbReference type="SMR" id="Q8S927"/>
<dbReference type="BioGRID" id="27722">
    <property type="interactions" value="1"/>
</dbReference>
<dbReference type="FunCoup" id="Q8S927">
    <property type="interactions" value="3056"/>
</dbReference>
<dbReference type="STRING" id="3702.Q8S927"/>
<dbReference type="PaxDb" id="3702-AT1G62040.2"/>
<dbReference type="ProteomicsDB" id="246743">
    <molecule id="Q8S927-1"/>
</dbReference>
<dbReference type="EnsemblPlants" id="AT1G62040.1">
    <molecule id="Q8S927-1"/>
    <property type="protein sequence ID" value="AT1G62040.1"/>
    <property type="gene ID" value="AT1G62040"/>
</dbReference>
<dbReference type="GeneID" id="842499"/>
<dbReference type="Gramene" id="AT1G62040.1">
    <molecule id="Q8S927-1"/>
    <property type="protein sequence ID" value="AT1G62040.1"/>
    <property type="gene ID" value="AT1G62040"/>
</dbReference>
<dbReference type="KEGG" id="ath:AT1G62040"/>
<dbReference type="Araport" id="AT1G62040"/>
<dbReference type="TAIR" id="AT1G62040">
    <property type="gene designation" value="ATG8C"/>
</dbReference>
<dbReference type="eggNOG" id="KOG1654">
    <property type="taxonomic scope" value="Eukaryota"/>
</dbReference>
<dbReference type="HOGENOM" id="CLU_119276_0_1_1"/>
<dbReference type="InParanoid" id="Q8S927"/>
<dbReference type="OMA" id="AKMKWMF"/>
<dbReference type="OrthoDB" id="6738456at2759"/>
<dbReference type="PhylomeDB" id="Q8S927"/>
<dbReference type="PRO" id="PR:Q8S927"/>
<dbReference type="Proteomes" id="UP000006548">
    <property type="component" value="Chromosome 1"/>
</dbReference>
<dbReference type="ExpressionAtlas" id="Q8S927">
    <property type="expression patterns" value="baseline and differential"/>
</dbReference>
<dbReference type="GO" id="GO:0000421">
    <property type="term" value="C:autophagosome membrane"/>
    <property type="evidence" value="ECO:0007669"/>
    <property type="project" value="UniProtKB-SubCell"/>
</dbReference>
<dbReference type="GO" id="GO:0031410">
    <property type="term" value="C:cytoplasmic vesicle"/>
    <property type="evidence" value="ECO:0007669"/>
    <property type="project" value="UniProtKB-KW"/>
</dbReference>
<dbReference type="GO" id="GO:0005874">
    <property type="term" value="C:microtubule"/>
    <property type="evidence" value="ECO:0007669"/>
    <property type="project" value="UniProtKB-KW"/>
</dbReference>
<dbReference type="GO" id="GO:0006914">
    <property type="term" value="P:autophagy"/>
    <property type="evidence" value="ECO:0007669"/>
    <property type="project" value="UniProtKB-KW"/>
</dbReference>
<dbReference type="GO" id="GO:0015031">
    <property type="term" value="P:protein transport"/>
    <property type="evidence" value="ECO:0007669"/>
    <property type="project" value="UniProtKB-KW"/>
</dbReference>
<dbReference type="CDD" id="cd16128">
    <property type="entry name" value="Ubl_ATG8"/>
    <property type="match status" value="1"/>
</dbReference>
<dbReference type="FunFam" id="3.10.20.90:FF:000010">
    <property type="entry name" value="Autophagy-related protein"/>
    <property type="match status" value="1"/>
</dbReference>
<dbReference type="Gene3D" id="3.10.20.90">
    <property type="entry name" value="Phosphatidylinositol 3-kinase Catalytic Subunit, Chain A, domain 1"/>
    <property type="match status" value="1"/>
</dbReference>
<dbReference type="InterPro" id="IPR004241">
    <property type="entry name" value="Atg8-like"/>
</dbReference>
<dbReference type="InterPro" id="IPR029071">
    <property type="entry name" value="Ubiquitin-like_domsf"/>
</dbReference>
<dbReference type="PANTHER" id="PTHR10969">
    <property type="entry name" value="MICROTUBULE-ASSOCIATED PROTEINS 1A/1B LIGHT CHAIN 3-RELATED"/>
    <property type="match status" value="1"/>
</dbReference>
<dbReference type="Pfam" id="PF02991">
    <property type="entry name" value="ATG8"/>
    <property type="match status" value="1"/>
</dbReference>
<dbReference type="SUPFAM" id="SSF54236">
    <property type="entry name" value="Ubiquitin-like"/>
    <property type="match status" value="1"/>
</dbReference>
<organism>
    <name type="scientific">Arabidopsis thaliana</name>
    <name type="common">Mouse-ear cress</name>
    <dbReference type="NCBI Taxonomy" id="3702"/>
    <lineage>
        <taxon>Eukaryota</taxon>
        <taxon>Viridiplantae</taxon>
        <taxon>Streptophyta</taxon>
        <taxon>Embryophyta</taxon>
        <taxon>Tracheophyta</taxon>
        <taxon>Spermatophyta</taxon>
        <taxon>Magnoliopsida</taxon>
        <taxon>eudicotyledons</taxon>
        <taxon>Gunneridae</taxon>
        <taxon>Pentapetalae</taxon>
        <taxon>rosids</taxon>
        <taxon>malvids</taxon>
        <taxon>Brassicales</taxon>
        <taxon>Brassicaceae</taxon>
        <taxon>Camelineae</taxon>
        <taxon>Arabidopsis</taxon>
    </lineage>
</organism>
<proteinExistence type="evidence at protein level"/>
<feature type="chain" id="PRO_0000286909" description="Autophagy-related protein 8c">
    <location>
        <begin position="1"/>
        <end position="117"/>
    </location>
</feature>
<feature type="propeptide" id="PRO_0000286910" description="Removed in mature form" evidence="2">
    <location>
        <begin position="118"/>
        <end position="119"/>
    </location>
</feature>
<feature type="site" description="Cleavage; by ATG4" evidence="2">
    <location>
        <begin position="117"/>
        <end position="118"/>
    </location>
</feature>
<feature type="lipid moiety-binding region" description="Phosphatidylethanolamine amidated glycine" evidence="1">
    <location>
        <position position="117"/>
    </location>
</feature>
<comment type="function">
    <text evidence="1">Ubiquitin-like modifier involved in autophagosomes formation. May mediate the delivery of the autophagosomes to the vacuole via the microtubule cytoskeleton.</text>
</comment>
<comment type="subunit">
    <text evidence="3 5">Interacts with ATG4 (By similarity). Interacts with NBR1 (PubMed:21606687).</text>
</comment>
<comment type="subcellular location">
    <subcellularLocation>
        <location evidence="1">Cytoplasmic vesicle</location>
        <location evidence="1">Autophagosome membrane</location>
        <topology evidence="1">Lipid-anchor</topology>
    </subcellularLocation>
    <subcellularLocation>
        <location evidence="1">Vacuole membrane</location>
        <topology evidence="1">Lipid-anchor</topology>
    </subcellularLocation>
    <subcellularLocation>
        <location evidence="3">Cytoplasm</location>
        <location evidence="3">Cytoskeleton</location>
    </subcellularLocation>
</comment>
<comment type="alternative products">
    <event type="alternative splicing"/>
    <isoform>
        <id>Q8S927-1</id>
        <name>1</name>
        <sequence type="displayed"/>
    </isoform>
    <text>A number of isoforms are produced. According to EST sequences.</text>
</comment>
<comment type="tissue specificity">
    <text evidence="4">Constitutively expressed.</text>
</comment>
<comment type="PTM">
    <text evidence="1">The C-terminal 2 residues are removed by ATG4 to expose Gly-117 at the C-terminus. This Gly-117 forms then a thioester bond with the 'Cys-558' of ATG7 (E1-like activating enzyme) before being transferred to the 'Cys-258' of ATG3 (the specific E2 conjugating enzyme), in order to be finally amidated with phosphatidylethanolamine. This lipid modification anchors ATG8 to autophagosomes.</text>
</comment>
<comment type="similarity">
    <text evidence="6">Belongs to the ATG8 family.</text>
</comment>
<comment type="sequence caution" evidence="6">
    <conflict type="erroneous gene model prediction">
        <sequence resource="EMBL-CDS" id="AAC28521"/>
    </conflict>
</comment>
<evidence type="ECO:0000250" key="1">
    <source>
        <dbReference type="UniProtKB" id="P38182"/>
    </source>
</evidence>
<evidence type="ECO:0000250" key="2">
    <source>
        <dbReference type="UniProtKB" id="Q2XPP5"/>
    </source>
</evidence>
<evidence type="ECO:0000250" key="3">
    <source>
        <dbReference type="UniProtKB" id="Q8LEM4"/>
    </source>
</evidence>
<evidence type="ECO:0000269" key="4">
    <source>
    </source>
</evidence>
<evidence type="ECO:0000269" key="5">
    <source>
    </source>
</evidence>
<evidence type="ECO:0000305" key="6"/>
<keyword id="KW-0025">Alternative splicing</keyword>
<keyword id="KW-0072">Autophagy</keyword>
<keyword id="KW-0963">Cytoplasm</keyword>
<keyword id="KW-0968">Cytoplasmic vesicle</keyword>
<keyword id="KW-0206">Cytoskeleton</keyword>
<keyword id="KW-0449">Lipoprotein</keyword>
<keyword id="KW-0472">Membrane</keyword>
<keyword id="KW-0493">Microtubule</keyword>
<keyword id="KW-0653">Protein transport</keyword>
<keyword id="KW-1185">Reference proteome</keyword>
<keyword id="KW-0813">Transport</keyword>
<keyword id="KW-0833">Ubl conjugation pathway</keyword>
<keyword id="KW-0926">Vacuole</keyword>
<reference key="1">
    <citation type="journal article" date="2002" name="Plant Physiol.">
        <title>Leaf senescence and starvation-induced chlorosis are accelerated by the disruption of an Arabidopsis autophagy gene.</title>
        <authorList>
            <person name="Hanaoka H."/>
            <person name="Noda T."/>
            <person name="Shirano Y."/>
            <person name="Kato T."/>
            <person name="Hayashi H."/>
            <person name="Shibata D."/>
            <person name="Tabata S."/>
            <person name="Ohsumi Y."/>
        </authorList>
    </citation>
    <scope>NUCLEOTIDE SEQUENCE [MRNA]</scope>
    <scope>NOMENCLATURE</scope>
    <scope>GENE FAMILY</scope>
</reference>
<reference key="2">
    <citation type="journal article" date="2000" name="Nature">
        <title>Sequence and analysis of chromosome 1 of the plant Arabidopsis thaliana.</title>
        <authorList>
            <person name="Theologis A."/>
            <person name="Ecker J.R."/>
            <person name="Palm C.J."/>
            <person name="Federspiel N.A."/>
            <person name="Kaul S."/>
            <person name="White O."/>
            <person name="Alonso J."/>
            <person name="Altafi H."/>
            <person name="Araujo R."/>
            <person name="Bowman C.L."/>
            <person name="Brooks S.Y."/>
            <person name="Buehler E."/>
            <person name="Chan A."/>
            <person name="Chao Q."/>
            <person name="Chen H."/>
            <person name="Cheuk R.F."/>
            <person name="Chin C.W."/>
            <person name="Chung M.K."/>
            <person name="Conn L."/>
            <person name="Conway A.B."/>
            <person name="Conway A.R."/>
            <person name="Creasy T.H."/>
            <person name="Dewar K."/>
            <person name="Dunn P."/>
            <person name="Etgu P."/>
            <person name="Feldblyum T.V."/>
            <person name="Feng J.-D."/>
            <person name="Fong B."/>
            <person name="Fujii C.Y."/>
            <person name="Gill J.E."/>
            <person name="Goldsmith A.D."/>
            <person name="Haas B."/>
            <person name="Hansen N.F."/>
            <person name="Hughes B."/>
            <person name="Huizar L."/>
            <person name="Hunter J.L."/>
            <person name="Jenkins J."/>
            <person name="Johnson-Hopson C."/>
            <person name="Khan S."/>
            <person name="Khaykin E."/>
            <person name="Kim C.J."/>
            <person name="Koo H.L."/>
            <person name="Kremenetskaia I."/>
            <person name="Kurtz D.B."/>
            <person name="Kwan A."/>
            <person name="Lam B."/>
            <person name="Langin-Hooper S."/>
            <person name="Lee A."/>
            <person name="Lee J.M."/>
            <person name="Lenz C.A."/>
            <person name="Li J.H."/>
            <person name="Li Y.-P."/>
            <person name="Lin X."/>
            <person name="Liu S.X."/>
            <person name="Liu Z.A."/>
            <person name="Luros J.S."/>
            <person name="Maiti R."/>
            <person name="Marziali A."/>
            <person name="Militscher J."/>
            <person name="Miranda M."/>
            <person name="Nguyen M."/>
            <person name="Nierman W.C."/>
            <person name="Osborne B.I."/>
            <person name="Pai G."/>
            <person name="Peterson J."/>
            <person name="Pham P.K."/>
            <person name="Rizzo M."/>
            <person name="Rooney T."/>
            <person name="Rowley D."/>
            <person name="Sakano H."/>
            <person name="Salzberg S.L."/>
            <person name="Schwartz J.R."/>
            <person name="Shinn P."/>
            <person name="Southwick A.M."/>
            <person name="Sun H."/>
            <person name="Tallon L.J."/>
            <person name="Tambunga G."/>
            <person name="Toriumi M.J."/>
            <person name="Town C.D."/>
            <person name="Utterback T."/>
            <person name="Van Aken S."/>
            <person name="Vaysberg M."/>
            <person name="Vysotskaia V.S."/>
            <person name="Walker M."/>
            <person name="Wu D."/>
            <person name="Yu G."/>
            <person name="Fraser C.M."/>
            <person name="Venter J.C."/>
            <person name="Davis R.W."/>
        </authorList>
    </citation>
    <scope>NUCLEOTIDE SEQUENCE [LARGE SCALE GENOMIC DNA]</scope>
    <source>
        <strain>cv. Columbia</strain>
    </source>
</reference>
<reference key="3">
    <citation type="journal article" date="2017" name="Plant J.">
        <title>Araport11: a complete reannotation of the Arabidopsis thaliana reference genome.</title>
        <authorList>
            <person name="Cheng C.Y."/>
            <person name="Krishnakumar V."/>
            <person name="Chan A.P."/>
            <person name="Thibaud-Nissen F."/>
            <person name="Schobel S."/>
            <person name="Town C.D."/>
        </authorList>
    </citation>
    <scope>GENOME REANNOTATION</scope>
    <source>
        <strain>cv. Columbia</strain>
    </source>
</reference>
<reference key="4">
    <citation type="journal article" date="2002" name="Science">
        <title>Functional annotation of a full-length Arabidopsis cDNA collection.</title>
        <authorList>
            <person name="Seki M."/>
            <person name="Narusaka M."/>
            <person name="Kamiya A."/>
            <person name="Ishida J."/>
            <person name="Satou M."/>
            <person name="Sakurai T."/>
            <person name="Nakajima M."/>
            <person name="Enju A."/>
            <person name="Akiyama K."/>
            <person name="Oono Y."/>
            <person name="Muramatsu M."/>
            <person name="Hayashizaki Y."/>
            <person name="Kawai J."/>
            <person name="Carninci P."/>
            <person name="Itoh M."/>
            <person name="Ishii Y."/>
            <person name="Arakawa T."/>
            <person name="Shibata K."/>
            <person name="Shinagawa A."/>
            <person name="Shinozaki K."/>
        </authorList>
    </citation>
    <scope>NUCLEOTIDE SEQUENCE [LARGE SCALE MRNA]</scope>
    <source>
        <strain>cv. Columbia</strain>
    </source>
</reference>
<reference key="5">
    <citation type="journal article" date="2003" name="Science">
        <title>Empirical analysis of transcriptional activity in the Arabidopsis genome.</title>
        <authorList>
            <person name="Yamada K."/>
            <person name="Lim J."/>
            <person name="Dale J.M."/>
            <person name="Chen H."/>
            <person name="Shinn P."/>
            <person name="Palm C.J."/>
            <person name="Southwick A.M."/>
            <person name="Wu H.C."/>
            <person name="Kim C.J."/>
            <person name="Nguyen M."/>
            <person name="Pham P.K."/>
            <person name="Cheuk R.F."/>
            <person name="Karlin-Newmann G."/>
            <person name="Liu S.X."/>
            <person name="Lam B."/>
            <person name="Sakano H."/>
            <person name="Wu T."/>
            <person name="Yu G."/>
            <person name="Miranda M."/>
            <person name="Quach H.L."/>
            <person name="Tripp M."/>
            <person name="Chang C.H."/>
            <person name="Lee J.M."/>
            <person name="Toriumi M.J."/>
            <person name="Chan M.M."/>
            <person name="Tang C.C."/>
            <person name="Onodera C.S."/>
            <person name="Deng J.M."/>
            <person name="Akiyama K."/>
            <person name="Ansari Y."/>
            <person name="Arakawa T."/>
            <person name="Banh J."/>
            <person name="Banno F."/>
            <person name="Bowser L."/>
            <person name="Brooks S.Y."/>
            <person name="Carninci P."/>
            <person name="Chao Q."/>
            <person name="Choy N."/>
            <person name="Enju A."/>
            <person name="Goldsmith A.D."/>
            <person name="Gurjal M."/>
            <person name="Hansen N.F."/>
            <person name="Hayashizaki Y."/>
            <person name="Johnson-Hopson C."/>
            <person name="Hsuan V.W."/>
            <person name="Iida K."/>
            <person name="Karnes M."/>
            <person name="Khan S."/>
            <person name="Koesema E."/>
            <person name="Ishida J."/>
            <person name="Jiang P.X."/>
            <person name="Jones T."/>
            <person name="Kawai J."/>
            <person name="Kamiya A."/>
            <person name="Meyers C."/>
            <person name="Nakajima M."/>
            <person name="Narusaka M."/>
            <person name="Seki M."/>
            <person name="Sakurai T."/>
            <person name="Satou M."/>
            <person name="Tamse R."/>
            <person name="Vaysberg M."/>
            <person name="Wallender E.K."/>
            <person name="Wong C."/>
            <person name="Yamamura Y."/>
            <person name="Yuan S."/>
            <person name="Shinozaki K."/>
            <person name="Davis R.W."/>
            <person name="Theologis A."/>
            <person name="Ecker J.R."/>
        </authorList>
    </citation>
    <scope>NUCLEOTIDE SEQUENCE [LARGE SCALE MRNA]</scope>
    <source>
        <strain>cv. Columbia</strain>
    </source>
</reference>
<reference key="6">
    <citation type="submission" date="2002-03" db="EMBL/GenBank/DDBJ databases">
        <title>Full-length cDNA from Arabidopsis thaliana.</title>
        <authorList>
            <person name="Brover V.V."/>
            <person name="Troukhan M.E."/>
            <person name="Alexandrov N.A."/>
            <person name="Lu Y.-P."/>
            <person name="Flavell R.B."/>
            <person name="Feldmann K.A."/>
        </authorList>
    </citation>
    <scope>NUCLEOTIDE SEQUENCE [LARGE SCALE MRNA]</scope>
</reference>
<reference key="7">
    <citation type="journal article" date="2004" name="Plant Cell">
        <title>Processing of ATG8s, ubiquitin-like proteins, and their deconjugation by ATG4s are essential for plant autophagy.</title>
        <authorList>
            <person name="Yoshimoto K."/>
            <person name="Hanaoka H."/>
            <person name="Sato S."/>
            <person name="Kato T."/>
            <person name="Tabata S."/>
            <person name="Noda T."/>
            <person name="Ohsumi Y."/>
        </authorList>
    </citation>
    <scope>TISSUE SPECIFICITY</scope>
</reference>
<reference key="8">
    <citation type="journal article" date="2011" name="Autophagy">
        <title>Plant NBR1 is a selective autophagy substrate and a functional hybrid of the mammalian autophagic adapters NBR1 and p62/SQSTM1.</title>
        <authorList>
            <person name="Svenning S."/>
            <person name="Lamark T."/>
            <person name="Krause K."/>
            <person name="Johansen T."/>
        </authorList>
    </citation>
    <scope>INTERACTION WITH NBR1</scope>
</reference>
<protein>
    <recommendedName>
        <fullName>Autophagy-related protein 8c</fullName>
    </recommendedName>
    <alternativeName>
        <fullName>Autophagy-related ubiquitin-like modifier ATG8c</fullName>
        <shortName>AtAPG8c</shortName>
        <shortName>Protein autophagy 8c</shortName>
    </alternativeName>
</protein>
<name>ATG8C_ARATH</name>
<sequence>MANSSFKLEHPLERRQIESSRIREKYPDRIPVIVERAERSDVPNIDKKKYLVPADLTVGQFVYVVRKRIKLSAEKAIFVFVKNTLPPTAAMMSAIYDENKDEDGFLYMTYSGENTFGLV</sequence>
<accession>Q8S927</accession>
<accession>O80708</accession>
<gene>
    <name type="primary">ATG8C</name>
    <name type="synonym">APG8C</name>
    <name type="ordered locus">At1g62040</name>
    <name type="ORF">F8K4.23</name>
</gene>